<name>Y043_METJA</name>
<keyword id="KW-0068">Autocatalytic cleavage</keyword>
<keyword id="KW-0651">Protein splicing</keyword>
<keyword id="KW-1185">Reference proteome</keyword>
<proteinExistence type="predicted"/>
<protein>
    <recommendedName>
        <fullName>Uncharacterized protein MJ0043</fullName>
    </recommendedName>
    <component>
        <recommendedName>
            <fullName>Mja hyp1 intein</fullName>
        </recommendedName>
    </component>
</protein>
<sequence>MIANVDLHIHSRFSGGTSKDMNVENILKYGKLKGLNIIGTGDCTHPDYLEEIKQYKDRELILTTEIEDKNRVHHLILLPSISKVEELREILKKYSKDIDKEGRPRVSIGGAELLEIVRDVGGLIGPAHCVPPDTLLILENGFKRIVDIKVGDKVLTHENRFKKVEKVYKRRYIGDIIKIKVRYFPEEIILTPEHPVYAIKTEKRCDGSHGICKFNCLTQYTNPSCKKRYRKYKREWIIAKDLKVGDVIVYPIPNRVRDIKYLSLDKYLSNIKREFCRSRIPEKIEVSEEFCRLVGYFLSEGYCFRDGIGFALGENEKKIIDDIEYLMKKIFNLKPKIRDDGRSEGIELKYYSRVLRDFFGDMFYCGDEKRAWNKALPNEFLYLPKNKQLQIFIGWWRGDKGVTTSEILMNQLRLISLRLGFIITFSKHVPKNPKIGDREVIKYHARWQGRVSILDEKIVDELKNEDIKLPKKDVRYGWIKGNYLYAPIIRIGREYYDGFVYNLEVEDDSSYVTVSGTLHNCFTPWTSLYKSFDSIYDCYNKKPDFVELGLSADTDMADMIPELRDLPFLSNSDAHSYHPHRLGREFNQIEVDYIGGIEDNFEQIKKAIKHNKIIANYGLDPKLGKYHLTACSKCHTRFKLEDAKKYNWKCPKCGGSIKKGVLSRVEELSDGKIEHPKFRPPYYKLIPLAEMISLTIGKGIFTKAVQSLWEEFIKKYGNEIEVLINADIDELSKIHPKVAETINLFRKGKIYIYPGGGGEYGKISFKPQKVEWYREEVTLDRWLKQ</sequence>
<dbReference type="EMBL" id="L77117">
    <property type="protein sequence ID" value="AAB98023.1"/>
    <property type="molecule type" value="Genomic_DNA"/>
</dbReference>
<dbReference type="PIR" id="C64305">
    <property type="entry name" value="C64305"/>
</dbReference>
<dbReference type="SMR" id="Q60348"/>
<dbReference type="STRING" id="243232.MJ_0043"/>
<dbReference type="PaxDb" id="243232-MJ_0043"/>
<dbReference type="EnsemblBacteria" id="AAB98023">
    <property type="protein sequence ID" value="AAB98023"/>
    <property type="gene ID" value="MJ_0043"/>
</dbReference>
<dbReference type="KEGG" id="mja:MJ_0043"/>
<dbReference type="eggNOG" id="arCOG04881">
    <property type="taxonomic scope" value="Archaea"/>
</dbReference>
<dbReference type="HOGENOM" id="CLU_357040_0_0_2"/>
<dbReference type="InParanoid" id="Q60348"/>
<dbReference type="OrthoDB" id="114814at2157"/>
<dbReference type="PhylomeDB" id="Q60348"/>
<dbReference type="Proteomes" id="UP000000805">
    <property type="component" value="Chromosome"/>
</dbReference>
<dbReference type="GO" id="GO:0004519">
    <property type="term" value="F:endonuclease activity"/>
    <property type="evidence" value="ECO:0007669"/>
    <property type="project" value="InterPro"/>
</dbReference>
<dbReference type="GO" id="GO:0016539">
    <property type="term" value="P:intein-mediated protein splicing"/>
    <property type="evidence" value="ECO:0007669"/>
    <property type="project" value="InterPro"/>
</dbReference>
<dbReference type="CDD" id="cd00081">
    <property type="entry name" value="Hint"/>
    <property type="match status" value="1"/>
</dbReference>
<dbReference type="CDD" id="cd19067">
    <property type="entry name" value="PfuEndoQ-like"/>
    <property type="match status" value="1"/>
</dbReference>
<dbReference type="Gene3D" id="2.170.16.10">
    <property type="entry name" value="Hedgehog/Intein (Hint) domain"/>
    <property type="match status" value="1"/>
</dbReference>
<dbReference type="Gene3D" id="3.10.28.10">
    <property type="entry name" value="Homing endonucleases"/>
    <property type="match status" value="1"/>
</dbReference>
<dbReference type="InterPro" id="IPR005287">
    <property type="entry name" value="CHP00375"/>
</dbReference>
<dbReference type="InterPro" id="IPR003586">
    <property type="entry name" value="Hint_dom_C"/>
</dbReference>
<dbReference type="InterPro" id="IPR003587">
    <property type="entry name" value="Hint_dom_N"/>
</dbReference>
<dbReference type="InterPro" id="IPR036844">
    <property type="entry name" value="Hint_dom_sf"/>
</dbReference>
<dbReference type="InterPro" id="IPR027434">
    <property type="entry name" value="Homing_endonucl"/>
</dbReference>
<dbReference type="InterPro" id="IPR006142">
    <property type="entry name" value="INTEIN"/>
</dbReference>
<dbReference type="InterPro" id="IPR030934">
    <property type="entry name" value="Intein_C"/>
</dbReference>
<dbReference type="InterPro" id="IPR004042">
    <property type="entry name" value="Intein_endonuc_central"/>
</dbReference>
<dbReference type="InterPro" id="IPR006141">
    <property type="entry name" value="Intein_N"/>
</dbReference>
<dbReference type="InterPro" id="IPR003141">
    <property type="entry name" value="Pol/His_phosphatase_N"/>
</dbReference>
<dbReference type="InterPro" id="IPR016195">
    <property type="entry name" value="Pol/histidinol_Pase-like"/>
</dbReference>
<dbReference type="NCBIfam" id="TIGR01443">
    <property type="entry name" value="intein_Cterm"/>
    <property type="match status" value="1"/>
</dbReference>
<dbReference type="NCBIfam" id="TIGR01445">
    <property type="entry name" value="intein_Nterm"/>
    <property type="match status" value="1"/>
</dbReference>
<dbReference type="NCBIfam" id="TIGR00375">
    <property type="entry name" value="TIGR00375 family protein"/>
    <property type="match status" value="1"/>
</dbReference>
<dbReference type="PANTHER" id="PTHR40084">
    <property type="entry name" value="PHOSPHOHYDROLASE, PHP FAMILY"/>
    <property type="match status" value="1"/>
</dbReference>
<dbReference type="PANTHER" id="PTHR40084:SF1">
    <property type="entry name" value="PHOSPHOTRANSFERASE"/>
    <property type="match status" value="1"/>
</dbReference>
<dbReference type="PRINTS" id="PR00379">
    <property type="entry name" value="INTEIN"/>
</dbReference>
<dbReference type="SMART" id="SM00305">
    <property type="entry name" value="HintC"/>
    <property type="match status" value="1"/>
</dbReference>
<dbReference type="SMART" id="SM00306">
    <property type="entry name" value="HintN"/>
    <property type="match status" value="1"/>
</dbReference>
<dbReference type="SMART" id="SM00481">
    <property type="entry name" value="POLIIIAc"/>
    <property type="match status" value="1"/>
</dbReference>
<dbReference type="SUPFAM" id="SSF51294">
    <property type="entry name" value="Hedgehog/intein (Hint) domain"/>
    <property type="match status" value="2"/>
</dbReference>
<dbReference type="SUPFAM" id="SSF89550">
    <property type="entry name" value="PHP domain-like"/>
    <property type="match status" value="1"/>
</dbReference>
<dbReference type="PROSITE" id="PS50818">
    <property type="entry name" value="INTEIN_C_TER"/>
    <property type="match status" value="1"/>
</dbReference>
<dbReference type="PROSITE" id="PS50819">
    <property type="entry name" value="INTEIN_ENDONUCLEASE"/>
    <property type="match status" value="1"/>
</dbReference>
<dbReference type="PROSITE" id="PS50817">
    <property type="entry name" value="INTEIN_N_TER"/>
    <property type="match status" value="1"/>
</dbReference>
<accession>Q60348</accession>
<comment type="PTM">
    <text evidence="3">This protein undergoes a protein self splicing that involves a post-translational excision of the intervening region (intein) followed by peptide ligation.</text>
</comment>
<feature type="chain" id="PRO_0000013988" description="Uncharacterized protein MJ0043, 1st part" evidence="1">
    <location>
        <begin position="1"/>
        <end position="128"/>
    </location>
</feature>
<feature type="chain" id="PRO_0000013989" description="Mja hyp1 intein" evidence="1">
    <location>
        <begin position="129"/>
        <end position="520"/>
    </location>
</feature>
<feature type="chain" id="PRO_0000013990" description="Uncharacterized protein MJ0043, 2nd part" evidence="1">
    <location>
        <begin position="521"/>
        <end position="785"/>
    </location>
</feature>
<feature type="domain" description="DOD-type homing endonuclease" evidence="2">
    <location>
        <begin position="293"/>
        <end position="421"/>
    </location>
</feature>
<evidence type="ECO:0000255" key="1"/>
<evidence type="ECO:0000255" key="2">
    <source>
        <dbReference type="PROSITE-ProRule" id="PRU00273"/>
    </source>
</evidence>
<evidence type="ECO:0000305" key="3"/>
<gene>
    <name type="ordered locus">MJ0043</name>
</gene>
<reference key="1">
    <citation type="journal article" date="1996" name="Science">
        <title>Complete genome sequence of the methanogenic archaeon, Methanococcus jannaschii.</title>
        <authorList>
            <person name="Bult C.J."/>
            <person name="White O."/>
            <person name="Olsen G.J."/>
            <person name="Zhou L."/>
            <person name="Fleischmann R.D."/>
            <person name="Sutton G.G."/>
            <person name="Blake J.A."/>
            <person name="FitzGerald L.M."/>
            <person name="Clayton R.A."/>
            <person name="Gocayne J.D."/>
            <person name="Kerlavage A.R."/>
            <person name="Dougherty B.A."/>
            <person name="Tomb J.-F."/>
            <person name="Adams M.D."/>
            <person name="Reich C.I."/>
            <person name="Overbeek R."/>
            <person name="Kirkness E.F."/>
            <person name="Weinstock K.G."/>
            <person name="Merrick J.M."/>
            <person name="Glodek A."/>
            <person name="Scott J.L."/>
            <person name="Geoghagen N.S.M."/>
            <person name="Weidman J.F."/>
            <person name="Fuhrmann J.L."/>
            <person name="Nguyen D."/>
            <person name="Utterback T.R."/>
            <person name="Kelley J.M."/>
            <person name="Peterson J.D."/>
            <person name="Sadow P.W."/>
            <person name="Hanna M.C."/>
            <person name="Cotton M.D."/>
            <person name="Roberts K.M."/>
            <person name="Hurst M.A."/>
            <person name="Kaine B.P."/>
            <person name="Borodovsky M."/>
            <person name="Klenk H.-P."/>
            <person name="Fraser C.M."/>
            <person name="Smith H.O."/>
            <person name="Woese C.R."/>
            <person name="Venter J.C."/>
        </authorList>
    </citation>
    <scope>NUCLEOTIDE SEQUENCE [LARGE SCALE GENOMIC DNA]</scope>
    <source>
        <strain>ATCC 43067 / DSM 2661 / JAL-1 / JCM 10045 / NBRC 100440</strain>
    </source>
</reference>
<organism>
    <name type="scientific">Methanocaldococcus jannaschii (strain ATCC 43067 / DSM 2661 / JAL-1 / JCM 10045 / NBRC 100440)</name>
    <name type="common">Methanococcus jannaschii</name>
    <dbReference type="NCBI Taxonomy" id="243232"/>
    <lineage>
        <taxon>Archaea</taxon>
        <taxon>Methanobacteriati</taxon>
        <taxon>Methanobacteriota</taxon>
        <taxon>Methanomada group</taxon>
        <taxon>Methanococci</taxon>
        <taxon>Methanococcales</taxon>
        <taxon>Methanocaldococcaceae</taxon>
        <taxon>Methanocaldococcus</taxon>
    </lineage>
</organism>